<dbReference type="EC" id="2.5.1.7" evidence="1"/>
<dbReference type="EMBL" id="CP000970">
    <property type="protein sequence ID" value="ACB15605.1"/>
    <property type="molecule type" value="Genomic_DNA"/>
</dbReference>
<dbReference type="RefSeq" id="WP_000357259.1">
    <property type="nucleotide sequence ID" value="NC_010498.1"/>
</dbReference>
<dbReference type="SMR" id="B1LGF5"/>
<dbReference type="GeneID" id="93778792"/>
<dbReference type="KEGG" id="ecm:EcSMS35_3485"/>
<dbReference type="HOGENOM" id="CLU_027387_0_0_6"/>
<dbReference type="UniPathway" id="UPA00219"/>
<dbReference type="Proteomes" id="UP000007011">
    <property type="component" value="Chromosome"/>
</dbReference>
<dbReference type="GO" id="GO:0005737">
    <property type="term" value="C:cytoplasm"/>
    <property type="evidence" value="ECO:0007669"/>
    <property type="project" value="UniProtKB-SubCell"/>
</dbReference>
<dbReference type="GO" id="GO:0008760">
    <property type="term" value="F:UDP-N-acetylglucosamine 1-carboxyvinyltransferase activity"/>
    <property type="evidence" value="ECO:0007669"/>
    <property type="project" value="UniProtKB-UniRule"/>
</dbReference>
<dbReference type="GO" id="GO:0051301">
    <property type="term" value="P:cell division"/>
    <property type="evidence" value="ECO:0007669"/>
    <property type="project" value="UniProtKB-KW"/>
</dbReference>
<dbReference type="GO" id="GO:0071555">
    <property type="term" value="P:cell wall organization"/>
    <property type="evidence" value="ECO:0007669"/>
    <property type="project" value="UniProtKB-KW"/>
</dbReference>
<dbReference type="GO" id="GO:0009252">
    <property type="term" value="P:peptidoglycan biosynthetic process"/>
    <property type="evidence" value="ECO:0007669"/>
    <property type="project" value="UniProtKB-UniRule"/>
</dbReference>
<dbReference type="GO" id="GO:0008360">
    <property type="term" value="P:regulation of cell shape"/>
    <property type="evidence" value="ECO:0007669"/>
    <property type="project" value="UniProtKB-KW"/>
</dbReference>
<dbReference type="GO" id="GO:0019277">
    <property type="term" value="P:UDP-N-acetylgalactosamine biosynthetic process"/>
    <property type="evidence" value="ECO:0007669"/>
    <property type="project" value="InterPro"/>
</dbReference>
<dbReference type="CDD" id="cd01555">
    <property type="entry name" value="UdpNAET"/>
    <property type="match status" value="1"/>
</dbReference>
<dbReference type="FunFam" id="3.65.10.10:FF:000002">
    <property type="entry name" value="UDP-N-acetylglucosamine 1-carboxyvinyltransferase"/>
    <property type="match status" value="1"/>
</dbReference>
<dbReference type="Gene3D" id="3.65.10.10">
    <property type="entry name" value="Enolpyruvate transferase domain"/>
    <property type="match status" value="2"/>
</dbReference>
<dbReference type="HAMAP" id="MF_00111">
    <property type="entry name" value="MurA"/>
    <property type="match status" value="1"/>
</dbReference>
<dbReference type="InterPro" id="IPR001986">
    <property type="entry name" value="Enolpyruvate_Tfrase_dom"/>
</dbReference>
<dbReference type="InterPro" id="IPR036968">
    <property type="entry name" value="Enolpyruvate_Tfrase_sf"/>
</dbReference>
<dbReference type="InterPro" id="IPR050068">
    <property type="entry name" value="MurA_subfamily"/>
</dbReference>
<dbReference type="InterPro" id="IPR013792">
    <property type="entry name" value="RNA3'P_cycl/enolpyr_Trfase_a/b"/>
</dbReference>
<dbReference type="InterPro" id="IPR005750">
    <property type="entry name" value="UDP_GlcNAc_COvinyl_MurA"/>
</dbReference>
<dbReference type="NCBIfam" id="TIGR01072">
    <property type="entry name" value="murA"/>
    <property type="match status" value="1"/>
</dbReference>
<dbReference type="NCBIfam" id="NF006873">
    <property type="entry name" value="PRK09369.1"/>
    <property type="match status" value="1"/>
</dbReference>
<dbReference type="PANTHER" id="PTHR43783">
    <property type="entry name" value="UDP-N-ACETYLGLUCOSAMINE 1-CARBOXYVINYLTRANSFERASE"/>
    <property type="match status" value="1"/>
</dbReference>
<dbReference type="PANTHER" id="PTHR43783:SF1">
    <property type="entry name" value="UDP-N-ACETYLGLUCOSAMINE 1-CARBOXYVINYLTRANSFERASE"/>
    <property type="match status" value="1"/>
</dbReference>
<dbReference type="Pfam" id="PF00275">
    <property type="entry name" value="EPSP_synthase"/>
    <property type="match status" value="1"/>
</dbReference>
<dbReference type="SUPFAM" id="SSF55205">
    <property type="entry name" value="EPT/RTPC-like"/>
    <property type="match status" value="1"/>
</dbReference>
<organism>
    <name type="scientific">Escherichia coli (strain SMS-3-5 / SECEC)</name>
    <dbReference type="NCBI Taxonomy" id="439855"/>
    <lineage>
        <taxon>Bacteria</taxon>
        <taxon>Pseudomonadati</taxon>
        <taxon>Pseudomonadota</taxon>
        <taxon>Gammaproteobacteria</taxon>
        <taxon>Enterobacterales</taxon>
        <taxon>Enterobacteriaceae</taxon>
        <taxon>Escherichia</taxon>
    </lineage>
</organism>
<protein>
    <recommendedName>
        <fullName evidence="1">UDP-N-acetylglucosamine 1-carboxyvinyltransferase</fullName>
        <ecNumber evidence="1">2.5.1.7</ecNumber>
    </recommendedName>
    <alternativeName>
        <fullName evidence="1">Enoylpyruvate transferase</fullName>
    </alternativeName>
    <alternativeName>
        <fullName evidence="1">UDP-N-acetylglucosamine enolpyruvyl transferase</fullName>
        <shortName evidence="1">EPT</shortName>
    </alternativeName>
</protein>
<evidence type="ECO:0000255" key="1">
    <source>
        <dbReference type="HAMAP-Rule" id="MF_00111"/>
    </source>
</evidence>
<gene>
    <name evidence="1" type="primary">murA</name>
    <name type="ordered locus">EcSMS35_3485</name>
</gene>
<sequence>MDKFRVQGPTKLQGEVTISGAKNAALPILFAALLAEEPVEIQNVPKLKDVDTSMKLLSQLGAKVERNGSVHIDARDVNVFCAPYDLVKTMRASIWALGPLVARFGQGQVSLPGGCTIGARPVDLHISGLEQLGATIKLEEGYVKASVDGRLKGAHIVMDKVSVGATVTIMCAATLAEGTTIIENAAREPEIVDTANFLITLGAKISGQGTDRIVIEGVERLGGGVYRVLPDRIETGTFLVAAAISRGKIICRNAQPDTLDAVLAKLRDAGADIEVGEDWISLDMHGKRPKAVNVRTAPHPAFPTDMQAQFTLLNLVAEGTGFITETVFENRFMHVPELSRMGAHAEIESNTVICHGVEKLSGAQVMATDLRASASLVLAGCIAEGTTVVDRIYHIDRGYERIEDKLRALGANIERVKGE</sequence>
<keyword id="KW-0131">Cell cycle</keyword>
<keyword id="KW-0132">Cell division</keyword>
<keyword id="KW-0133">Cell shape</keyword>
<keyword id="KW-0961">Cell wall biogenesis/degradation</keyword>
<keyword id="KW-0963">Cytoplasm</keyword>
<keyword id="KW-0573">Peptidoglycan synthesis</keyword>
<keyword id="KW-0670">Pyruvate</keyword>
<keyword id="KW-0808">Transferase</keyword>
<reference key="1">
    <citation type="journal article" date="2008" name="J. Bacteriol.">
        <title>Insights into the environmental resistance gene pool from the genome sequence of the multidrug-resistant environmental isolate Escherichia coli SMS-3-5.</title>
        <authorList>
            <person name="Fricke W.F."/>
            <person name="Wright M.S."/>
            <person name="Lindell A.H."/>
            <person name="Harkins D.M."/>
            <person name="Baker-Austin C."/>
            <person name="Ravel J."/>
            <person name="Stepanauskas R."/>
        </authorList>
    </citation>
    <scope>NUCLEOTIDE SEQUENCE [LARGE SCALE GENOMIC DNA]</scope>
    <source>
        <strain>SMS-3-5 / SECEC</strain>
    </source>
</reference>
<accession>B1LGF5</accession>
<name>MURA_ECOSM</name>
<feature type="chain" id="PRO_1000117508" description="UDP-N-acetylglucosamine 1-carboxyvinyltransferase">
    <location>
        <begin position="1"/>
        <end position="419"/>
    </location>
</feature>
<feature type="active site" description="Proton donor" evidence="1">
    <location>
        <position position="115"/>
    </location>
</feature>
<feature type="binding site" evidence="1">
    <location>
        <begin position="22"/>
        <end position="23"/>
    </location>
    <ligand>
        <name>phosphoenolpyruvate</name>
        <dbReference type="ChEBI" id="CHEBI:58702"/>
    </ligand>
</feature>
<feature type="binding site" evidence="1">
    <location>
        <position position="91"/>
    </location>
    <ligand>
        <name>UDP-N-acetyl-alpha-D-glucosamine</name>
        <dbReference type="ChEBI" id="CHEBI:57705"/>
    </ligand>
</feature>
<feature type="binding site" evidence="1">
    <location>
        <begin position="120"/>
        <end position="124"/>
    </location>
    <ligand>
        <name>UDP-N-acetyl-alpha-D-glucosamine</name>
        <dbReference type="ChEBI" id="CHEBI:57705"/>
    </ligand>
</feature>
<feature type="binding site" evidence="1">
    <location>
        <begin position="160"/>
        <end position="163"/>
    </location>
    <ligand>
        <name>UDP-N-acetyl-alpha-D-glucosamine</name>
        <dbReference type="ChEBI" id="CHEBI:57705"/>
    </ligand>
</feature>
<feature type="binding site" evidence="1">
    <location>
        <position position="305"/>
    </location>
    <ligand>
        <name>UDP-N-acetyl-alpha-D-glucosamine</name>
        <dbReference type="ChEBI" id="CHEBI:57705"/>
    </ligand>
</feature>
<feature type="binding site" evidence="1">
    <location>
        <position position="327"/>
    </location>
    <ligand>
        <name>UDP-N-acetyl-alpha-D-glucosamine</name>
        <dbReference type="ChEBI" id="CHEBI:57705"/>
    </ligand>
</feature>
<feature type="modified residue" description="2-(S-cysteinyl)pyruvic acid O-phosphothioketal" evidence="1">
    <location>
        <position position="115"/>
    </location>
</feature>
<proteinExistence type="inferred from homology"/>
<comment type="function">
    <text evidence="1">Cell wall formation. Adds enolpyruvyl to UDP-N-acetylglucosamine.</text>
</comment>
<comment type="catalytic activity">
    <reaction evidence="1">
        <text>phosphoenolpyruvate + UDP-N-acetyl-alpha-D-glucosamine = UDP-N-acetyl-3-O-(1-carboxyvinyl)-alpha-D-glucosamine + phosphate</text>
        <dbReference type="Rhea" id="RHEA:18681"/>
        <dbReference type="ChEBI" id="CHEBI:43474"/>
        <dbReference type="ChEBI" id="CHEBI:57705"/>
        <dbReference type="ChEBI" id="CHEBI:58702"/>
        <dbReference type="ChEBI" id="CHEBI:68483"/>
        <dbReference type="EC" id="2.5.1.7"/>
    </reaction>
</comment>
<comment type="pathway">
    <text evidence="1">Cell wall biogenesis; peptidoglycan biosynthesis.</text>
</comment>
<comment type="subcellular location">
    <subcellularLocation>
        <location evidence="1">Cytoplasm</location>
    </subcellularLocation>
</comment>
<comment type="similarity">
    <text evidence="1">Belongs to the EPSP synthase family. MurA subfamily.</text>
</comment>